<dbReference type="EC" id="7.1.1.2" evidence="1"/>
<dbReference type="EMBL" id="Y18001">
    <property type="protein sequence ID" value="CAA76994.1"/>
    <property type="molecule type" value="Genomic_DNA"/>
</dbReference>
<dbReference type="PIR" id="T11506">
    <property type="entry name" value="T11506"/>
</dbReference>
<dbReference type="RefSeq" id="NP_008458.1">
    <property type="nucleotide sequence ID" value="NC_001992.1"/>
</dbReference>
<dbReference type="SMR" id="Q9ZXY4"/>
<dbReference type="GeneID" id="808322"/>
<dbReference type="CTD" id="4535"/>
<dbReference type="GO" id="GO:0005743">
    <property type="term" value="C:mitochondrial inner membrane"/>
    <property type="evidence" value="ECO:0000250"/>
    <property type="project" value="UniProtKB"/>
</dbReference>
<dbReference type="GO" id="GO:0008137">
    <property type="term" value="F:NADH dehydrogenase (ubiquinone) activity"/>
    <property type="evidence" value="ECO:0000250"/>
    <property type="project" value="UniProtKB"/>
</dbReference>
<dbReference type="GO" id="GO:0006120">
    <property type="term" value="P:mitochondrial electron transport, NADH to ubiquinone"/>
    <property type="evidence" value="ECO:0000250"/>
    <property type="project" value="UniProtKB"/>
</dbReference>
<dbReference type="GO" id="GO:0032981">
    <property type="term" value="P:mitochondrial respiratory chain complex I assembly"/>
    <property type="evidence" value="ECO:0000250"/>
    <property type="project" value="UniProtKB"/>
</dbReference>
<dbReference type="HAMAP" id="MF_01350">
    <property type="entry name" value="NDH1_NuoH"/>
    <property type="match status" value="1"/>
</dbReference>
<dbReference type="InterPro" id="IPR001694">
    <property type="entry name" value="NADH_UbQ_OxRdtase_su1/FPO"/>
</dbReference>
<dbReference type="InterPro" id="IPR018086">
    <property type="entry name" value="NADH_UbQ_OxRdtase_su1_CS"/>
</dbReference>
<dbReference type="PANTHER" id="PTHR11432">
    <property type="entry name" value="NADH DEHYDROGENASE SUBUNIT 1"/>
    <property type="match status" value="1"/>
</dbReference>
<dbReference type="PANTHER" id="PTHR11432:SF3">
    <property type="entry name" value="NADH-UBIQUINONE OXIDOREDUCTASE CHAIN 1"/>
    <property type="match status" value="1"/>
</dbReference>
<dbReference type="Pfam" id="PF00146">
    <property type="entry name" value="NADHdh"/>
    <property type="match status" value="1"/>
</dbReference>
<dbReference type="PROSITE" id="PS00667">
    <property type="entry name" value="COMPLEX1_ND1_1"/>
    <property type="match status" value="1"/>
</dbReference>
<dbReference type="PROSITE" id="PS00668">
    <property type="entry name" value="COMPLEX1_ND1_2"/>
    <property type="match status" value="1"/>
</dbReference>
<protein>
    <recommendedName>
        <fullName>NADH-ubiquinone oxidoreductase chain 1</fullName>
        <ecNumber evidence="1">7.1.1.2</ecNumber>
    </recommendedName>
    <alternativeName>
        <fullName>NADH dehydrogenase subunit 1</fullName>
    </alternativeName>
</protein>
<reference key="1">
    <citation type="journal article" date="1998" name="J. Mol. Evol.">
        <title>Molecular timing of primate divergences as estimated by two nonprimate calibration points.</title>
        <authorList>
            <person name="Arnason U."/>
            <person name="Gullberg A."/>
            <person name="Janke A."/>
        </authorList>
    </citation>
    <scope>NUCLEOTIDE SEQUENCE [GENOMIC DNA]</scope>
</reference>
<evidence type="ECO:0000250" key="1">
    <source>
        <dbReference type="UniProtKB" id="P03886"/>
    </source>
</evidence>
<evidence type="ECO:0000250" key="2">
    <source>
        <dbReference type="UniProtKB" id="P03887"/>
    </source>
</evidence>
<evidence type="ECO:0000255" key="3"/>
<evidence type="ECO:0000305" key="4"/>
<keyword id="KW-0249">Electron transport</keyword>
<keyword id="KW-0472">Membrane</keyword>
<keyword id="KW-0496">Mitochondrion</keyword>
<keyword id="KW-0999">Mitochondrion inner membrane</keyword>
<keyword id="KW-0520">NAD</keyword>
<keyword id="KW-0679">Respiratory chain</keyword>
<keyword id="KW-1278">Translocase</keyword>
<keyword id="KW-0812">Transmembrane</keyword>
<keyword id="KW-1133">Transmembrane helix</keyword>
<keyword id="KW-0813">Transport</keyword>
<keyword id="KW-0830">Ubiquinone</keyword>
<name>NU1M_PAPHA</name>
<sequence>MTTMNLLLLIMSTLAAMAFLTLVERKLLGYMQLRKGPNIVGPYGLLQPFADAMKLFTKEPLKPSTSSTILYITAPALAFSIALLLWTPLPMPNPLINFNLGLLFILATSSLTVYSILWSGWASNSNYALIGALRAVAQMISYEVTLSIILLSILLTSGSFNLNMLITTQEHLWLILPSWPLAMMWFTSTLAETNRTPFDLMEGESELVSGFNIEYSAGPFALFFMAEYMNIIMMNALTTTIFLGTFYPTHSPELFTTSFTIKTLLLTSLFLWIRAAYPRFRYDQLMHLLWKSFLPLTLALLMWSTSMPIAISSIPPQT</sequence>
<accession>Q9ZXY4</accession>
<organism>
    <name type="scientific">Papio hamadryas</name>
    <name type="common">Hamadryas baboon</name>
    <dbReference type="NCBI Taxonomy" id="9557"/>
    <lineage>
        <taxon>Eukaryota</taxon>
        <taxon>Metazoa</taxon>
        <taxon>Chordata</taxon>
        <taxon>Craniata</taxon>
        <taxon>Vertebrata</taxon>
        <taxon>Euteleostomi</taxon>
        <taxon>Mammalia</taxon>
        <taxon>Eutheria</taxon>
        <taxon>Euarchontoglires</taxon>
        <taxon>Primates</taxon>
        <taxon>Haplorrhini</taxon>
        <taxon>Catarrhini</taxon>
        <taxon>Cercopithecidae</taxon>
        <taxon>Cercopithecinae</taxon>
        <taxon>Papio</taxon>
    </lineage>
</organism>
<comment type="function">
    <text evidence="1">Core subunit of the mitochondrial membrane respiratory chain NADH dehydrogenase (Complex I) which catalyzes electron transfer from NADH through the respiratory chain, using ubiquinone as an electron acceptor. Essential for the catalytic activity and assembly of complex I.</text>
</comment>
<comment type="catalytic activity">
    <reaction evidence="1">
        <text>a ubiquinone + NADH + 5 H(+)(in) = a ubiquinol + NAD(+) + 4 H(+)(out)</text>
        <dbReference type="Rhea" id="RHEA:29091"/>
        <dbReference type="Rhea" id="RHEA-COMP:9565"/>
        <dbReference type="Rhea" id="RHEA-COMP:9566"/>
        <dbReference type="ChEBI" id="CHEBI:15378"/>
        <dbReference type="ChEBI" id="CHEBI:16389"/>
        <dbReference type="ChEBI" id="CHEBI:17976"/>
        <dbReference type="ChEBI" id="CHEBI:57540"/>
        <dbReference type="ChEBI" id="CHEBI:57945"/>
        <dbReference type="EC" id="7.1.1.2"/>
    </reaction>
</comment>
<comment type="subunit">
    <text evidence="2">Core subunit of respiratory chain NADH dehydrogenase (Complex I) which is composed of 45 different subunits.</text>
</comment>
<comment type="subcellular location">
    <subcellularLocation>
        <location evidence="2">Mitochondrion inner membrane</location>
        <topology evidence="3">Multi-pass membrane protein</topology>
    </subcellularLocation>
</comment>
<comment type="similarity">
    <text evidence="4">Belongs to the complex I subunit 1 family.</text>
</comment>
<feature type="chain" id="PRO_0000117445" description="NADH-ubiquinone oxidoreductase chain 1">
    <location>
        <begin position="1"/>
        <end position="318"/>
    </location>
</feature>
<feature type="transmembrane region" description="Helical" evidence="3">
    <location>
        <begin position="3"/>
        <end position="23"/>
    </location>
</feature>
<feature type="transmembrane region" description="Helical" evidence="3">
    <location>
        <begin position="69"/>
        <end position="89"/>
    </location>
</feature>
<feature type="transmembrane region" description="Helical" evidence="3">
    <location>
        <begin position="98"/>
        <end position="118"/>
    </location>
</feature>
<feature type="transmembrane region" description="Helical" evidence="3">
    <location>
        <begin position="135"/>
        <end position="155"/>
    </location>
</feature>
<feature type="transmembrane region" description="Helical" evidence="3">
    <location>
        <begin position="171"/>
        <end position="191"/>
    </location>
</feature>
<feature type="transmembrane region" description="Helical" evidence="3">
    <location>
        <begin position="217"/>
        <end position="237"/>
    </location>
</feature>
<feature type="transmembrane region" description="Helical" evidence="3">
    <location>
        <begin position="253"/>
        <end position="273"/>
    </location>
</feature>
<feature type="transmembrane region" description="Helical" evidence="3">
    <location>
        <begin position="294"/>
        <end position="314"/>
    </location>
</feature>
<geneLocation type="mitochondrion"/>
<proteinExistence type="inferred from homology"/>
<gene>
    <name type="primary">MT-ND1</name>
    <name type="synonym">MTND1</name>
    <name type="synonym">NADH1</name>
    <name type="synonym">ND1</name>
</gene>